<keyword id="KW-0002">3D-structure</keyword>
<keyword id="KW-0007">Acetylation</keyword>
<keyword id="KW-0025">Alternative splicing</keyword>
<keyword id="KW-0044">Antibiotic</keyword>
<keyword id="KW-0929">Antimicrobial</keyword>
<keyword id="KW-0903">Direct protein sequencing</keyword>
<keyword id="KW-0295">Fungicide</keyword>
<keyword id="KW-0325">Glycoprotein</keyword>
<keyword id="KW-0378">Hydrolase</keyword>
<keyword id="KW-0464">Manganese</keyword>
<keyword id="KW-0472">Membrane</keyword>
<keyword id="KW-0479">Metal-binding</keyword>
<keyword id="KW-0645">Protease</keyword>
<keyword id="KW-0654">Proteoglycan</keyword>
<keyword id="KW-1267">Proteomics identification</keyword>
<keyword id="KW-1185">Reference proteome</keyword>
<keyword id="KW-0964">Secreted</keyword>
<keyword id="KW-0732">Signal</keyword>
<keyword id="KW-0812">Transmembrane</keyword>
<keyword id="KW-1133">Transmembrane helix</keyword>
<keyword id="KW-0862">Zinc</keyword>
<protein>
    <recommendedName>
        <fullName evidence="11">Dermcidin</fullName>
        <ecNumber evidence="4">3.4.-.-</ecNumber>
    </recommendedName>
    <alternativeName>
        <fullName evidence="14">Preproteolysin</fullName>
    </alternativeName>
    <component>
        <recommendedName>
            <fullName evidence="17">Survival-promoting peptide</fullName>
        </recommendedName>
    </component>
    <component>
        <recommendedName>
            <fullName evidence="11">DCD-1</fullName>
        </recommendedName>
    </component>
</protein>
<feature type="signal peptide" evidence="3 4 7 10">
    <location>
        <begin position="1"/>
        <end position="19"/>
    </location>
</feature>
<feature type="chain" id="PRO_0000021081" description="Dermcidin" evidence="2 3 4 7 10">
    <location>
        <begin position="20"/>
        <end position="110"/>
    </location>
</feature>
<feature type="peptide" id="PRO_0000021082" description="Survival-promoting peptide" evidence="10">
    <location>
        <begin position="20"/>
        <end position="49"/>
    </location>
</feature>
<feature type="propeptide" id="PRO_0000021083" evidence="2">
    <location>
        <begin position="50"/>
        <end position="62"/>
    </location>
</feature>
<feature type="peptide" id="PRO_0000021084" description="DCD-1" evidence="2 4">
    <location>
        <begin position="63"/>
        <end position="109"/>
    </location>
</feature>
<feature type="propeptide" id="PRO_0000408312" evidence="2 7">
    <location>
        <position position="110"/>
    </location>
</feature>
<feature type="transmembrane region" description="Helical" evidence="16">
    <location>
        <begin position="64"/>
        <end position="108"/>
    </location>
</feature>
<feature type="region of interest" description="Disordered" evidence="1">
    <location>
        <begin position="24"/>
        <end position="70"/>
    </location>
</feature>
<feature type="binding site" description="in chain A" evidence="5 19">
    <location>
        <position position="67"/>
    </location>
    <ligand>
        <name>Zn(2+)</name>
        <dbReference type="ChEBI" id="CHEBI:29105"/>
        <label>1</label>
        <note>structural; ligand shared between 2 chains of the homohexamer</note>
    </ligand>
</feature>
<feature type="binding site" description="in chain A" evidence="5 19">
    <location>
        <position position="71"/>
    </location>
    <ligand>
        <name>Zn(2+)</name>
        <dbReference type="ChEBI" id="CHEBI:29105"/>
        <label>1</label>
        <note>structural; ligand shared between 2 chains of the homohexamer</note>
    </ligand>
</feature>
<feature type="binding site" evidence="5 19">
    <location>
        <position position="86"/>
    </location>
    <ligand>
        <name>Zn(2+)</name>
        <dbReference type="ChEBI" id="CHEBI:29105"/>
        <label>2</label>
        <note>structural</note>
    </ligand>
</feature>
<feature type="binding site" evidence="5 19">
    <location>
        <position position="90"/>
    </location>
    <ligand>
        <name>Zn(2+)</name>
        <dbReference type="ChEBI" id="CHEBI:29105"/>
        <label>2</label>
        <note>structural</note>
    </ligand>
</feature>
<feature type="binding site" description="in chain B" evidence="5 19">
    <location>
        <position position="100"/>
    </location>
    <ligand>
        <name>Zn(2+)</name>
        <dbReference type="ChEBI" id="CHEBI:29105"/>
        <label>1</label>
        <note>structural; ligand shared between 2 chains of the homohexamer</note>
    </ligand>
</feature>
<feature type="binding site" description="in chain B" evidence="5 19">
    <location>
        <position position="104"/>
    </location>
    <ligand>
        <name>Zn(2+)</name>
        <dbReference type="ChEBI" id="CHEBI:29105"/>
        <label>1</label>
        <note>structural; ligand shared between 2 chains of the homohexamer</note>
    </ligand>
</feature>
<feature type="modified residue" description="N6-acetyllysine" evidence="20">
    <location>
        <position position="68"/>
    </location>
</feature>
<feature type="glycosylation site" description="O-linked (Xyl...) (chondroitin sulfate) serine" evidence="6 8 9">
    <location>
        <position position="30"/>
    </location>
</feature>
<feature type="glycosylation site" description="O-linked (Xyl...) (chondroitin sulfate) serine" evidence="8">
    <location>
        <position position="38"/>
    </location>
</feature>
<feature type="splice variant" id="VSP_043765" description="In isoform 3." evidence="12">
    <original>PCHEASAAQKENAGEDPGLARQAPKPRKQRSSLLEKGLDGAKKAV</original>
    <variation>HKQMDCLQLQKPPSETAKFLSSSTNLPRREKLVPSAKPPHTRGLV</variation>
    <location>
        <begin position="33"/>
        <end position="77"/>
    </location>
</feature>
<feature type="splice variant" id="VSP_043766" description="In isoform 3." evidence="12">
    <location>
        <begin position="78"/>
        <end position="110"/>
    </location>
</feature>
<feature type="splice variant" id="VSP_043767" description="In isoform 2." evidence="15">
    <original>AVHDVKDVLDSVL</original>
    <variation>GEERLVFGAPVNLTSIPLTSVSRP</variation>
    <location>
        <begin position="98"/>
        <end position="110"/>
    </location>
</feature>
<feature type="mutagenesis site" description="Loss of anion channel activity." evidence="5">
    <original>H</original>
    <variation>A</variation>
    <location>
        <position position="100"/>
    </location>
</feature>
<feature type="helix" evidence="21">
    <location>
        <begin position="65"/>
        <end position="105"/>
    </location>
</feature>
<organism>
    <name type="scientific">Homo sapiens</name>
    <name type="common">Human</name>
    <dbReference type="NCBI Taxonomy" id="9606"/>
    <lineage>
        <taxon>Eukaryota</taxon>
        <taxon>Metazoa</taxon>
        <taxon>Chordata</taxon>
        <taxon>Craniata</taxon>
        <taxon>Vertebrata</taxon>
        <taxon>Euteleostomi</taxon>
        <taxon>Mammalia</taxon>
        <taxon>Eutheria</taxon>
        <taxon>Euarchontoglires</taxon>
        <taxon>Primates</taxon>
        <taxon>Haplorrhini</taxon>
        <taxon>Catarrhini</taxon>
        <taxon>Hominidae</taxon>
        <taxon>Homo</taxon>
    </lineage>
</organism>
<name>DCD_HUMAN</name>
<dbReference type="EC" id="3.4.-.-" evidence="4"/>
<dbReference type="EMBL" id="AF144011">
    <property type="protein sequence ID" value="AAL18349.1"/>
    <property type="molecule type" value="mRNA"/>
</dbReference>
<dbReference type="EMBL" id="AY044239">
    <property type="protein sequence ID" value="AAK94785.1"/>
    <property type="molecule type" value="Genomic_DNA"/>
</dbReference>
<dbReference type="EMBL" id="AF418981">
    <property type="protein sequence ID" value="AAL25801.1"/>
    <property type="molecule type" value="Genomic_DNA"/>
</dbReference>
<dbReference type="EMBL" id="AY590150">
    <property type="protein sequence ID" value="AAS99907.1"/>
    <property type="molecule type" value="mRNA"/>
</dbReference>
<dbReference type="EMBL" id="EF503687">
    <property type="protein sequence ID" value="ABQ53649.1"/>
    <property type="molecule type" value="mRNA"/>
</dbReference>
<dbReference type="EMBL" id="EF503688">
    <property type="protein sequence ID" value="ABQ53650.1"/>
    <property type="molecule type" value="mRNA"/>
</dbReference>
<dbReference type="EMBL" id="EF503689">
    <property type="protein sequence ID" value="ABQ53651.1"/>
    <property type="molecule type" value="mRNA"/>
</dbReference>
<dbReference type="EMBL" id="AC079310">
    <property type="status" value="NOT_ANNOTATED_CDS"/>
    <property type="molecule type" value="Genomic_DNA"/>
</dbReference>
<dbReference type="EMBL" id="CH471054">
    <property type="protein sequence ID" value="EAW96794.1"/>
    <property type="molecule type" value="Genomic_DNA"/>
</dbReference>
<dbReference type="EMBL" id="BC062682">
    <property type="protein sequence ID" value="AAH62682.1"/>
    <property type="molecule type" value="mRNA"/>
</dbReference>
<dbReference type="EMBL" id="BC069108">
    <property type="protein sequence ID" value="AAH69108.1"/>
    <property type="molecule type" value="mRNA"/>
</dbReference>
<dbReference type="CCDS" id="CCDS73478.1">
    <molecule id="P81605-2"/>
</dbReference>
<dbReference type="CCDS" id="CCDS8884.1">
    <molecule id="P81605-1"/>
</dbReference>
<dbReference type="RefSeq" id="NP_001287783.1">
    <molecule id="P81605-2"/>
    <property type="nucleotide sequence ID" value="NM_001300854.2"/>
</dbReference>
<dbReference type="RefSeq" id="NP_444513.1">
    <molecule id="P81605-1"/>
    <property type="nucleotide sequence ID" value="NM_053283.4"/>
</dbReference>
<dbReference type="PDB" id="2KSG">
    <property type="method" value="NMR"/>
    <property type="chains" value="A=63-110"/>
</dbReference>
<dbReference type="PDB" id="2NDK">
    <property type="method" value="NMR"/>
    <property type="chains" value="A=63-110"/>
</dbReference>
<dbReference type="PDB" id="2YMK">
    <property type="method" value="X-ray"/>
    <property type="resolution" value="2.49 A"/>
    <property type="chains" value="A/B/C=63-110"/>
</dbReference>
<dbReference type="PDB" id="6SHK">
    <property type="method" value="X-ray"/>
    <property type="resolution" value="1.99 A"/>
    <property type="chains" value="A=63-110"/>
</dbReference>
<dbReference type="PDBsum" id="2KSG"/>
<dbReference type="PDBsum" id="2NDK"/>
<dbReference type="PDBsum" id="2YMK"/>
<dbReference type="PDBsum" id="6SHK"/>
<dbReference type="BMRB" id="P81605"/>
<dbReference type="SMR" id="P81605"/>
<dbReference type="BioGRID" id="125564">
    <property type="interactions" value="217"/>
</dbReference>
<dbReference type="ComplexPortal" id="CPX-6085">
    <property type="entry name" value="Dermcidin antimicrobial peptide complex"/>
</dbReference>
<dbReference type="FunCoup" id="P81605">
    <property type="interactions" value="438"/>
</dbReference>
<dbReference type="IntAct" id="P81605">
    <property type="interactions" value="84"/>
</dbReference>
<dbReference type="MINT" id="P81605"/>
<dbReference type="STRING" id="9606.ENSP00000406773"/>
<dbReference type="ChEMBL" id="CHEMBL4523267"/>
<dbReference type="DrugBank" id="DB01593">
    <property type="generic name" value="Zinc"/>
</dbReference>
<dbReference type="DrugBank" id="DB14487">
    <property type="generic name" value="Zinc acetate"/>
</dbReference>
<dbReference type="DrugBank" id="DB14533">
    <property type="generic name" value="Zinc chloride"/>
</dbReference>
<dbReference type="DrugBank" id="DB14548">
    <property type="generic name" value="Zinc sulfate, unspecified form"/>
</dbReference>
<dbReference type="TCDB" id="1.C.108.1.1">
    <property type="family name" value="the pore-forming dermcidin (dermcidin) family"/>
</dbReference>
<dbReference type="GlyCosmos" id="P81605">
    <property type="glycosylation" value="1 site, 1 glycan"/>
</dbReference>
<dbReference type="GlyGen" id="P81605">
    <property type="glycosylation" value="4 sites, 2 O-linked glycans (2 sites)"/>
</dbReference>
<dbReference type="iPTMnet" id="P81605"/>
<dbReference type="PhosphoSitePlus" id="P81605"/>
<dbReference type="SwissPalm" id="P81605"/>
<dbReference type="BioMuta" id="DCD"/>
<dbReference type="DMDM" id="20141302"/>
<dbReference type="jPOST" id="P81605"/>
<dbReference type="MassIVE" id="P81605"/>
<dbReference type="PaxDb" id="9606-ENSP00000406773"/>
<dbReference type="PeptideAtlas" id="P81605"/>
<dbReference type="ProteomicsDB" id="57698">
    <molecule id="P81605-1"/>
</dbReference>
<dbReference type="ProteomicsDB" id="57699">
    <molecule id="P81605-2"/>
</dbReference>
<dbReference type="TopDownProteomics" id="P81605-1">
    <molecule id="P81605-1"/>
</dbReference>
<dbReference type="Antibodypedia" id="27554">
    <property type="antibodies" value="210 antibodies from 28 providers"/>
</dbReference>
<dbReference type="DNASU" id="117159"/>
<dbReference type="Ensembl" id="ENST00000293371.11">
    <molecule id="P81605-1"/>
    <property type="protein sequence ID" value="ENSP00000293371.6"/>
    <property type="gene ID" value="ENSG00000161634.12"/>
</dbReference>
<dbReference type="Ensembl" id="ENST00000456047.2">
    <molecule id="P81605-2"/>
    <property type="protein sequence ID" value="ENSP00000406773.2"/>
    <property type="gene ID" value="ENSG00000161634.12"/>
</dbReference>
<dbReference type="Ensembl" id="ENST00000546807.5">
    <molecule id="P81605-3"/>
    <property type="protein sequence ID" value="ENSP00000450415.1"/>
    <property type="gene ID" value="ENSG00000161634.12"/>
</dbReference>
<dbReference type="GeneID" id="117159"/>
<dbReference type="KEGG" id="hsa:117159"/>
<dbReference type="MANE-Select" id="ENST00000293371.11">
    <property type="protein sequence ID" value="ENSP00000293371.6"/>
    <property type="RefSeq nucleotide sequence ID" value="NM_053283.4"/>
    <property type="RefSeq protein sequence ID" value="NP_444513.1"/>
</dbReference>
<dbReference type="UCSC" id="uc001sgj.4">
    <molecule id="P81605-1"/>
    <property type="organism name" value="human"/>
</dbReference>
<dbReference type="AGR" id="HGNC:14669"/>
<dbReference type="CTD" id="117159"/>
<dbReference type="DisGeNET" id="117159"/>
<dbReference type="GeneCards" id="DCD"/>
<dbReference type="HGNC" id="HGNC:14669">
    <property type="gene designation" value="DCD"/>
</dbReference>
<dbReference type="HPA" id="ENSG00000161634">
    <property type="expression patterns" value="Tissue enriched (skin)"/>
</dbReference>
<dbReference type="MIM" id="606634">
    <property type="type" value="gene"/>
</dbReference>
<dbReference type="neXtProt" id="NX_P81605"/>
<dbReference type="OpenTargets" id="ENSG00000161634"/>
<dbReference type="PharmGKB" id="PA27171"/>
<dbReference type="VEuPathDB" id="HostDB:ENSG00000161634"/>
<dbReference type="eggNOG" id="ENOG502RVUN">
    <property type="taxonomic scope" value="Eukaryota"/>
</dbReference>
<dbReference type="GeneTree" id="ENSGT00940000163391"/>
<dbReference type="HOGENOM" id="CLU_2060627_0_0_1"/>
<dbReference type="InParanoid" id="P81605"/>
<dbReference type="OMA" id="EWVLGAP"/>
<dbReference type="OrthoDB" id="9486262at2759"/>
<dbReference type="PAN-GO" id="P81605">
    <property type="GO annotations" value="1 GO annotation based on evolutionary models"/>
</dbReference>
<dbReference type="PhylomeDB" id="P81605"/>
<dbReference type="TreeFam" id="TF340896"/>
<dbReference type="PathwayCommons" id="P81605"/>
<dbReference type="Reactome" id="R-HSA-6803157">
    <property type="pathway name" value="Antimicrobial peptides"/>
</dbReference>
<dbReference type="SignaLink" id="P81605"/>
<dbReference type="BioGRID-ORCS" id="117159">
    <property type="hits" value="13 hits in 1150 CRISPR screens"/>
</dbReference>
<dbReference type="CD-CODE" id="DEE660B4">
    <property type="entry name" value="Stress granule"/>
</dbReference>
<dbReference type="EvolutionaryTrace" id="P81605"/>
<dbReference type="GeneWiki" id="Dermcidin"/>
<dbReference type="GenomeRNAi" id="117159"/>
<dbReference type="Pharos" id="P81605">
    <property type="development level" value="Tbio"/>
</dbReference>
<dbReference type="PRO" id="PR:P81605"/>
<dbReference type="Proteomes" id="UP000005640">
    <property type="component" value="Chromosome 12"/>
</dbReference>
<dbReference type="RNAct" id="P81605">
    <property type="molecule type" value="protein"/>
</dbReference>
<dbReference type="Bgee" id="ENSG00000161634">
    <property type="expression patterns" value="Expressed in upper leg skin and 85 other cell types or tissues"/>
</dbReference>
<dbReference type="GO" id="GO:0070062">
    <property type="term" value="C:extracellular exosome"/>
    <property type="evidence" value="ECO:0007005"/>
    <property type="project" value="UniProtKB"/>
</dbReference>
<dbReference type="GO" id="GO:0005576">
    <property type="term" value="C:extracellular region"/>
    <property type="evidence" value="ECO:0000314"/>
    <property type="project" value="UniProtKB"/>
</dbReference>
<dbReference type="GO" id="GO:0016020">
    <property type="term" value="C:membrane"/>
    <property type="evidence" value="ECO:0007669"/>
    <property type="project" value="UniProtKB-SubCell"/>
</dbReference>
<dbReference type="GO" id="GO:0008289">
    <property type="term" value="F:lipid binding"/>
    <property type="evidence" value="ECO:0000269"/>
    <property type="project" value="DisProt"/>
</dbReference>
<dbReference type="GO" id="GO:0046872">
    <property type="term" value="F:metal ion binding"/>
    <property type="evidence" value="ECO:0007669"/>
    <property type="project" value="UniProtKB-KW"/>
</dbReference>
<dbReference type="GO" id="GO:0005216">
    <property type="term" value="F:monoatomic ion channel activity"/>
    <property type="evidence" value="ECO:0000314"/>
    <property type="project" value="DisProt"/>
</dbReference>
<dbReference type="GO" id="GO:0008233">
    <property type="term" value="F:peptidase activity"/>
    <property type="evidence" value="ECO:0007669"/>
    <property type="project" value="UniProtKB-KW"/>
</dbReference>
<dbReference type="GO" id="GO:0003723">
    <property type="term" value="F:RNA binding"/>
    <property type="evidence" value="ECO:0007005"/>
    <property type="project" value="UniProtKB"/>
</dbReference>
<dbReference type="GO" id="GO:0042742">
    <property type="term" value="P:defense response to bacterium"/>
    <property type="evidence" value="ECO:0000314"/>
    <property type="project" value="DisProt"/>
</dbReference>
<dbReference type="GO" id="GO:0050832">
    <property type="term" value="P:defense response to fungus"/>
    <property type="evidence" value="ECO:0007669"/>
    <property type="project" value="UniProtKB-KW"/>
</dbReference>
<dbReference type="GO" id="GO:0051873">
    <property type="term" value="P:killing by host of symbiont cells"/>
    <property type="evidence" value="ECO:0000314"/>
    <property type="project" value="CACAO"/>
</dbReference>
<dbReference type="GO" id="GO:0006508">
    <property type="term" value="P:proteolysis"/>
    <property type="evidence" value="ECO:0007669"/>
    <property type="project" value="UniProtKB-KW"/>
</dbReference>
<dbReference type="Gene3D" id="6.10.140.580">
    <property type="match status" value="1"/>
</dbReference>
<dbReference type="InterPro" id="IPR028130">
    <property type="entry name" value="Dermcidin"/>
</dbReference>
<dbReference type="InterPro" id="IPR043557">
    <property type="entry name" value="Dermcidin/Lacritin"/>
</dbReference>
<dbReference type="PANTHER" id="PTHR40711:SF1">
    <property type="entry name" value="DERMCIDIN"/>
    <property type="match status" value="1"/>
</dbReference>
<dbReference type="PANTHER" id="PTHR40711">
    <property type="entry name" value="DERMCIDIN-RELATED"/>
    <property type="match status" value="1"/>
</dbReference>
<dbReference type="Pfam" id="PF15291">
    <property type="entry name" value="Dermcidin"/>
    <property type="match status" value="1"/>
</dbReference>
<sequence length="110" mass="11284">MRFMTLLFLTALAGALVCAYDPEAASAPGSGNPCHEASAAQKENAGEDPGLARQAPKPRKQRSSLLEKGLDGAKKAVGGLGKLGKDAVEDLESVGKGAVHDVKDVLDSVL</sequence>
<accession>P81605</accession>
<accession>A5JHP2</accession>
<accession>A5JHP3</accession>
<accession>P58461</accession>
<accession>Q53YJ2</accession>
<gene>
    <name evidence="18" type="primary">DCD</name>
    <name type="synonym">AIDD</name>
    <name evidence="13" type="synonym">DSEP</name>
</gene>
<reference key="1">
    <citation type="journal article" date="2001" name="Nat. Immunol.">
        <title>Dermcidin: a novel human antibiotic peptide secreted by sweat glands.</title>
        <authorList>
            <person name="Schittek B."/>
            <person name="Hipfel R."/>
            <person name="Sauer B."/>
            <person name="Bauer J."/>
            <person name="Kalbacher H."/>
            <person name="Stevanovic S."/>
            <person name="Schirle M."/>
            <person name="Schroeder K."/>
            <person name="Blin N."/>
            <person name="Meier F."/>
            <person name="Rassner G."/>
            <person name="Garbe C."/>
        </authorList>
    </citation>
    <scope>NUCLEOTIDE SEQUENCE [MRNA] (ISOFORM 1)</scope>
    <scope>PROTEIN SEQUENCE OF 63-109</scope>
    <scope>MASS SPECTROMETRY</scope>
    <scope>FUNCTION (DCD-1)</scope>
    <scope>SUBCELLULAR LOCATION</scope>
    <scope>TISSUE SPECIFICITY</scope>
    <source>
        <tissue>Melanoma</tissue>
    </source>
</reference>
<reference key="2">
    <citation type="submission" date="2001-07" db="EMBL/GenBank/DDBJ databases">
        <title>Overexpression of new survival/evasion peptide (DSEP) attenuates retinoic acid responses and protects cells.</title>
        <authorList>
            <person name="Cunningham T.J."/>
            <person name="Jing H."/>
            <person name="Akerblom I."/>
            <person name="Morgan R."/>
            <person name="Fisher T.S."/>
            <person name="Neveu M."/>
        </authorList>
    </citation>
    <scope>NUCLEOTIDE SEQUENCE [GENOMIC DNA]</scope>
</reference>
<reference key="3">
    <citation type="submission" date="2001-09" db="EMBL/GenBank/DDBJ databases">
        <title>Genomic structure and chromosomal mapping of human preproteolysin gene.</title>
        <authorList>
            <person name="Tang X.D."/>
            <person name="Daggett H."/>
            <person name="Hoshi T."/>
        </authorList>
    </citation>
    <scope>NUCLEOTIDE SEQUENCE [GENOMIC DNA]</scope>
</reference>
<reference key="4">
    <citation type="submission" date="2004-04" db="EMBL/GenBank/DDBJ databases">
        <title>Structural and functional homologies of human proteolysis inducing factor.</title>
        <authorList>
            <person name="Lowrie A.G."/>
            <person name="Wigmore S.J."/>
            <person name="Deans D.A.C."/>
            <person name="Fearon K.C.H."/>
            <person name="Waddell I."/>
            <person name="Ross J.A."/>
        </authorList>
    </citation>
    <scope>NUCLEOTIDE SEQUENCE [MRNA] (ISOFORM 1)</scope>
</reference>
<reference key="5">
    <citation type="journal article" date="2007" name="Biochem. Biophys. Res. Commun.">
        <title>Identification of dermcidin in human gestational tissue and characterization of its proteolytic activity.</title>
        <authorList>
            <person name="Lee Motoyama J.P."/>
            <person name="Kim-Motoyama H."/>
            <person name="Kim P."/>
            <person name="Nakagama H."/>
            <person name="Miyagawa K."/>
            <person name="Suzuki K."/>
        </authorList>
    </citation>
    <scope>NUCLEOTIDE SEQUENCE [MRNA] (ISOFORMS 1; 2 AND 3)</scope>
    <scope>PROTEIN SEQUENCE OF 20-41 AND 63-91</scope>
    <scope>FUNCTION</scope>
    <scope>CATALYTIC ACTIVITY</scope>
    <source>
        <tissue>Placenta</tissue>
    </source>
</reference>
<reference key="6">
    <citation type="journal article" date="2006" name="Nature">
        <title>The finished DNA sequence of human chromosome 12.</title>
        <authorList>
            <consortium name="Baylor College of Medicine Human Genome Sequencing Center Sequence Production Team"/>
            <person name="Scherer S.E."/>
            <person name="Muzny D.M."/>
            <person name="Buhay C.J."/>
            <person name="Chen R."/>
            <person name="Cree A."/>
            <person name="Ding Y."/>
            <person name="Dugan-Rocha S."/>
            <person name="Gill R."/>
            <person name="Gunaratne P."/>
            <person name="Harris R.A."/>
            <person name="Hawes A.C."/>
            <person name="Hernandez J."/>
            <person name="Hodgson A.V."/>
            <person name="Hume J."/>
            <person name="Jackson A."/>
            <person name="Khan Z.M."/>
            <person name="Kovar-Smith C."/>
            <person name="Lewis L.R."/>
            <person name="Lozado R.J."/>
            <person name="Metzker M.L."/>
            <person name="Milosavljevic A."/>
            <person name="Miner G.R."/>
            <person name="Montgomery K.T."/>
            <person name="Morgan M.B."/>
            <person name="Nazareth L.V."/>
            <person name="Scott G."/>
            <person name="Sodergren E."/>
            <person name="Song X.-Z."/>
            <person name="Steffen D."/>
            <person name="Lovering R.C."/>
            <person name="Wheeler D.A."/>
            <person name="Worley K.C."/>
            <person name="Yuan Y."/>
            <person name="Zhang Z."/>
            <person name="Adams C.Q."/>
            <person name="Ansari-Lari M.A."/>
            <person name="Ayele M."/>
            <person name="Brown M.J."/>
            <person name="Chen G."/>
            <person name="Chen Z."/>
            <person name="Clerc-Blankenburg K.P."/>
            <person name="Davis C."/>
            <person name="Delgado O."/>
            <person name="Dinh H.H."/>
            <person name="Draper H."/>
            <person name="Gonzalez-Garay M.L."/>
            <person name="Havlak P."/>
            <person name="Jackson L.R."/>
            <person name="Jacob L.S."/>
            <person name="Kelly S.H."/>
            <person name="Li L."/>
            <person name="Li Z."/>
            <person name="Liu J."/>
            <person name="Liu W."/>
            <person name="Lu J."/>
            <person name="Maheshwari M."/>
            <person name="Nguyen B.-V."/>
            <person name="Okwuonu G.O."/>
            <person name="Pasternak S."/>
            <person name="Perez L.M."/>
            <person name="Plopper F.J.H."/>
            <person name="Santibanez J."/>
            <person name="Shen H."/>
            <person name="Tabor P.E."/>
            <person name="Verduzco D."/>
            <person name="Waldron L."/>
            <person name="Wang Q."/>
            <person name="Williams G.A."/>
            <person name="Zhang J."/>
            <person name="Zhou J."/>
            <person name="Allen C.C."/>
            <person name="Amin A.G."/>
            <person name="Anyalebechi V."/>
            <person name="Bailey M."/>
            <person name="Barbaria J.A."/>
            <person name="Bimage K.E."/>
            <person name="Bryant N.P."/>
            <person name="Burch P.E."/>
            <person name="Burkett C.E."/>
            <person name="Burrell K.L."/>
            <person name="Calderon E."/>
            <person name="Cardenas V."/>
            <person name="Carter K."/>
            <person name="Casias K."/>
            <person name="Cavazos I."/>
            <person name="Cavazos S.R."/>
            <person name="Ceasar H."/>
            <person name="Chacko J."/>
            <person name="Chan S.N."/>
            <person name="Chavez D."/>
            <person name="Christopoulos C."/>
            <person name="Chu J."/>
            <person name="Cockrell R."/>
            <person name="Cox C.D."/>
            <person name="Dang M."/>
            <person name="Dathorne S.R."/>
            <person name="David R."/>
            <person name="Davis C.M."/>
            <person name="Davy-Carroll L."/>
            <person name="Deshazo D.R."/>
            <person name="Donlin J.E."/>
            <person name="D'Souza L."/>
            <person name="Eaves K.A."/>
            <person name="Egan A."/>
            <person name="Emery-Cohen A.J."/>
            <person name="Escotto M."/>
            <person name="Flagg N."/>
            <person name="Forbes L.D."/>
            <person name="Gabisi A.M."/>
            <person name="Garza M."/>
            <person name="Hamilton C."/>
            <person name="Henderson N."/>
            <person name="Hernandez O."/>
            <person name="Hines S."/>
            <person name="Hogues M.E."/>
            <person name="Huang M."/>
            <person name="Idlebird D.G."/>
            <person name="Johnson R."/>
            <person name="Jolivet A."/>
            <person name="Jones S."/>
            <person name="Kagan R."/>
            <person name="King L.M."/>
            <person name="Leal B."/>
            <person name="Lebow H."/>
            <person name="Lee S."/>
            <person name="LeVan J.M."/>
            <person name="Lewis L.C."/>
            <person name="London P."/>
            <person name="Lorensuhewa L.M."/>
            <person name="Loulseged H."/>
            <person name="Lovett D.A."/>
            <person name="Lucier A."/>
            <person name="Lucier R.L."/>
            <person name="Ma J."/>
            <person name="Madu R.C."/>
            <person name="Mapua P."/>
            <person name="Martindale A.D."/>
            <person name="Martinez E."/>
            <person name="Massey E."/>
            <person name="Mawhiney S."/>
            <person name="Meador M.G."/>
            <person name="Mendez S."/>
            <person name="Mercado C."/>
            <person name="Mercado I.C."/>
            <person name="Merritt C.E."/>
            <person name="Miner Z.L."/>
            <person name="Minja E."/>
            <person name="Mitchell T."/>
            <person name="Mohabbat F."/>
            <person name="Mohabbat K."/>
            <person name="Montgomery B."/>
            <person name="Moore N."/>
            <person name="Morris S."/>
            <person name="Munidasa M."/>
            <person name="Ngo R.N."/>
            <person name="Nguyen N.B."/>
            <person name="Nickerson E."/>
            <person name="Nwaokelemeh O.O."/>
            <person name="Nwokenkwo S."/>
            <person name="Obregon M."/>
            <person name="Oguh M."/>
            <person name="Oragunye N."/>
            <person name="Oviedo R.J."/>
            <person name="Parish B.J."/>
            <person name="Parker D.N."/>
            <person name="Parrish J."/>
            <person name="Parks K.L."/>
            <person name="Paul H.A."/>
            <person name="Payton B.A."/>
            <person name="Perez A."/>
            <person name="Perrin W."/>
            <person name="Pickens A."/>
            <person name="Primus E.L."/>
            <person name="Pu L.-L."/>
            <person name="Puazo M."/>
            <person name="Quiles M.M."/>
            <person name="Quiroz J.B."/>
            <person name="Rabata D."/>
            <person name="Reeves K."/>
            <person name="Ruiz S.J."/>
            <person name="Shao H."/>
            <person name="Sisson I."/>
            <person name="Sonaike T."/>
            <person name="Sorelle R.P."/>
            <person name="Sutton A.E."/>
            <person name="Svatek A.F."/>
            <person name="Svetz L.A."/>
            <person name="Tamerisa K.S."/>
            <person name="Taylor T.R."/>
            <person name="Teague B."/>
            <person name="Thomas N."/>
            <person name="Thorn R.D."/>
            <person name="Trejos Z.Y."/>
            <person name="Trevino B.K."/>
            <person name="Ukegbu O.N."/>
            <person name="Urban J.B."/>
            <person name="Vasquez L.I."/>
            <person name="Vera V.A."/>
            <person name="Villasana D.M."/>
            <person name="Wang L."/>
            <person name="Ward-Moore S."/>
            <person name="Warren J.T."/>
            <person name="Wei X."/>
            <person name="White F."/>
            <person name="Williamson A.L."/>
            <person name="Wleczyk R."/>
            <person name="Wooden H.S."/>
            <person name="Wooden S.H."/>
            <person name="Yen J."/>
            <person name="Yoon L."/>
            <person name="Yoon V."/>
            <person name="Zorrilla S.E."/>
            <person name="Nelson D."/>
            <person name="Kucherlapati R."/>
            <person name="Weinstock G."/>
            <person name="Gibbs R.A."/>
        </authorList>
    </citation>
    <scope>NUCLEOTIDE SEQUENCE [LARGE SCALE GENOMIC DNA]</scope>
</reference>
<reference key="7">
    <citation type="submission" date="2005-07" db="EMBL/GenBank/DDBJ databases">
        <authorList>
            <person name="Mural R.J."/>
            <person name="Istrail S."/>
            <person name="Sutton G."/>
            <person name="Florea L."/>
            <person name="Halpern A.L."/>
            <person name="Mobarry C.M."/>
            <person name="Lippert R."/>
            <person name="Walenz B."/>
            <person name="Shatkay H."/>
            <person name="Dew I."/>
            <person name="Miller J.R."/>
            <person name="Flanigan M.J."/>
            <person name="Edwards N.J."/>
            <person name="Bolanos R."/>
            <person name="Fasulo D."/>
            <person name="Halldorsson B.V."/>
            <person name="Hannenhalli S."/>
            <person name="Turner R."/>
            <person name="Yooseph S."/>
            <person name="Lu F."/>
            <person name="Nusskern D.R."/>
            <person name="Shue B.C."/>
            <person name="Zheng X.H."/>
            <person name="Zhong F."/>
            <person name="Delcher A.L."/>
            <person name="Huson D.H."/>
            <person name="Kravitz S.A."/>
            <person name="Mouchard L."/>
            <person name="Reinert K."/>
            <person name="Remington K.A."/>
            <person name="Clark A.G."/>
            <person name="Waterman M.S."/>
            <person name="Eichler E.E."/>
            <person name="Adams M.D."/>
            <person name="Hunkapiller M.W."/>
            <person name="Myers E.W."/>
            <person name="Venter J.C."/>
        </authorList>
    </citation>
    <scope>NUCLEOTIDE SEQUENCE [LARGE SCALE GENOMIC DNA]</scope>
</reference>
<reference key="8">
    <citation type="journal article" date="2004" name="Genome Res.">
        <title>The status, quality, and expansion of the NIH full-length cDNA project: the Mammalian Gene Collection (MGC).</title>
        <authorList>
            <consortium name="The MGC Project Team"/>
        </authorList>
    </citation>
    <scope>NUCLEOTIDE SEQUENCE [LARGE SCALE MRNA] (ISOFORM 1)</scope>
    <source>
        <tissue>Skin</tissue>
    </source>
</reference>
<reference key="9">
    <citation type="journal article" date="2015" name="J. Proteome Res.">
        <title>Human basal tear peptidome characterization by CID, HCD, and ETD followed by in silico and in vitro analyses for antimicrobial peptide identification.</title>
        <authorList>
            <person name="Azkargorta M."/>
            <person name="Soria J."/>
            <person name="Ojeda C."/>
            <person name="Guzman F."/>
            <person name="Acera A."/>
            <person name="Iloro I."/>
            <person name="Suarez T."/>
            <person name="Elortza F."/>
        </authorList>
    </citation>
    <scope>PROTEIN SEQUENCE OF 20-61 AND 66-110</scope>
    <scope>SUBCELLULAR LOCATION</scope>
    <source>
        <tissue>Tear</tissue>
    </source>
</reference>
<reference key="10">
    <citation type="journal article" date="1998" name="J. Neurosci.">
        <title>Identification of a survival-promoting peptide in medium conditioned by oxidatively stressed cell lines of nervous system origin.</title>
        <authorList>
            <person name="Cunningham T.J."/>
            <person name="Hodge L."/>
            <person name="Speicher D."/>
            <person name="Reim D."/>
            <person name="Tyler-Polsz C."/>
            <person name="Levitt P."/>
            <person name="Eagleson K."/>
            <person name="Kennedy S."/>
            <person name="Wang Y."/>
        </authorList>
    </citation>
    <scope>PROTEIN SEQUENCE OF 20-49</scope>
    <scope>FUNCTION (SURVIVAL-PROMOTING PEPTIDE)</scope>
    <scope>COFACTOR (SURVIVAL-PROMOTING PEPTIDE)</scope>
    <scope>SUBCELLULAR LOCATION (SURVIVAL-PROMOTING PEPTIDE)</scope>
    <source>
        <tissue>Retinoblastoma</tissue>
    </source>
</reference>
<reference key="11">
    <citation type="journal article" date="2004" name="Protein Sci.">
        <title>Signal peptide prediction based on analysis of experimentally verified cleavage sites.</title>
        <authorList>
            <person name="Zhang Z."/>
            <person name="Henzel W.J."/>
        </authorList>
    </citation>
    <scope>PROTEIN SEQUENCE OF 20-34</scope>
    <scope>SUBCELLULAR LOCATION</scope>
</reference>
<reference key="12">
    <citation type="journal article" date="2009" name="Science">
        <title>Lysine acetylation targets protein complexes and co-regulates major cellular functions.</title>
        <authorList>
            <person name="Choudhary C."/>
            <person name="Kumar C."/>
            <person name="Gnad F."/>
            <person name="Nielsen M.L."/>
            <person name="Rehman M."/>
            <person name="Walther T.C."/>
            <person name="Olsen J.V."/>
            <person name="Mann M."/>
        </authorList>
    </citation>
    <scope>ACETYLATION [LARGE SCALE ANALYSIS] AT LYS-68</scope>
    <scope>IDENTIFICATION BY MASS SPECTROMETRY [LARGE SCALE ANALYSIS]</scope>
</reference>
<reference key="13">
    <citation type="journal article" date="2011" name="BMC Syst. Biol.">
        <title>Initial characterization of the human central proteome.</title>
        <authorList>
            <person name="Burkard T.R."/>
            <person name="Planyavsky M."/>
            <person name="Kaupe I."/>
            <person name="Breitwieser F.P."/>
            <person name="Buerckstuemmer T."/>
            <person name="Bennett K.L."/>
            <person name="Superti-Furga G."/>
            <person name="Colinge J."/>
        </authorList>
    </citation>
    <scope>IDENTIFICATION BY MASS SPECTROMETRY [LARGE SCALE ANALYSIS]</scope>
</reference>
<reference key="14">
    <citation type="journal article" date="2014" name="J. Proteomics">
        <title>An enzyme assisted RP-RPLC approach for in-depth analysis of human liver phosphoproteome.</title>
        <authorList>
            <person name="Bian Y."/>
            <person name="Song C."/>
            <person name="Cheng K."/>
            <person name="Dong M."/>
            <person name="Wang F."/>
            <person name="Huang J."/>
            <person name="Sun D."/>
            <person name="Wang L."/>
            <person name="Ye M."/>
            <person name="Zou H."/>
        </authorList>
    </citation>
    <scope>IDENTIFICATION BY MASS SPECTROMETRY [LARGE SCALE ANALYSIS]</scope>
    <source>
        <tissue>Liver</tissue>
    </source>
</reference>
<reference key="15">
    <citation type="journal article" date="2015" name="Mol. Cell. Proteomics">
        <title>Identification of chondroitin sulfate linkage region glycopeptides reveals prohormones as a novel class of proteoglycans.</title>
        <authorList>
            <person name="Noborn F."/>
            <person name="Gomez Toledo A."/>
            <person name="Sihlbom C."/>
            <person name="Lengqvist J."/>
            <person name="Fries E."/>
            <person name="Kjellen L."/>
            <person name="Nilsson J."/>
            <person name="Larson G."/>
        </authorList>
    </citation>
    <scope>SUBCELLULAR LOCATION</scope>
    <scope>TISSUE SPECIFICITY</scope>
    <scope>GLYCOSYLATION AT SER-30</scope>
</reference>
<reference key="16">
    <citation type="journal article" date="2015" name="Proteomics">
        <title>N-terminome analysis of the human mitochondrial proteome.</title>
        <authorList>
            <person name="Vaca Jacome A.S."/>
            <person name="Rabilloud T."/>
            <person name="Schaeffer-Reiss C."/>
            <person name="Rompais M."/>
            <person name="Ayoub D."/>
            <person name="Lane L."/>
            <person name="Bairoch A."/>
            <person name="Van Dorsselaer A."/>
            <person name="Carapito C."/>
        </authorList>
    </citation>
    <scope>IDENTIFICATION BY MASS SPECTROMETRY [LARGE SCALE ANALYSIS]</scope>
</reference>
<reference key="17">
    <citation type="journal article" date="2022" name="J. Proteins Proteom.">
        <title>Mass spectrometric analysis of chondroitin sulfate-linked peptides.</title>
        <authorList>
            <person name="Ramarajan M.G."/>
            <person name="Saraswat M."/>
            <person name="Budhraja R."/>
            <person name="Garapati K."/>
            <person name="Raymond K."/>
            <person name="Pandey A."/>
        </authorList>
    </citation>
    <scope>SUBCELLULAR LOCATION</scope>
    <scope>TISSUE SPECIFICITY</scope>
    <scope>GLYCOSYLATION AT SER-30 AND SER-38</scope>
</reference>
<reference key="18">
    <citation type="journal article" date="2023" name="Mol. Cell. Proteomics">
        <title>Mapping the Human Chondroitin Sulfate Glycoproteome Reveals an Unexpected Correlation Between Glycan Sulfation and Attachment Site Characteristics.</title>
        <authorList>
            <person name="Noborn F."/>
            <person name="Nilsson J."/>
            <person name="Sihlbom C."/>
            <person name="Nikpour M."/>
            <person name="Kjellen L."/>
            <person name="Larson G."/>
        </authorList>
    </citation>
    <scope>SUBCELLULAR LOCATION</scope>
    <scope>TISSUE SPECIFICITY</scope>
    <scope>GLYCOSYLATION AT SER-30</scope>
</reference>
<reference key="19">
    <citation type="journal article" date="2010" name="BMB Rep.">
        <title>Analysis of the solution structure of the human antibiotic peptide dermcidin and its interaction with phospholipid vesicles.</title>
        <authorList>
            <person name="Jung H.H."/>
            <person name="Yang S.T."/>
            <person name="Sim J.Y."/>
            <person name="Lee S."/>
            <person name="Lee J.Y."/>
            <person name="Kim H.H."/>
            <person name="Shin S.Y."/>
            <person name="Kim J.I."/>
        </authorList>
    </citation>
    <scope>STRUCTURE BY NMR OF 63-110</scope>
</reference>
<reference evidence="19" key="20">
    <citation type="journal article" date="2013" name="Proc. Natl. Acad. Sci. U.S.A.">
        <title>Crystal structure and functional mechanism of a human antimicrobial membrane channel.</title>
        <authorList>
            <person name="Song C."/>
            <person name="Weichbrodt C."/>
            <person name="Salnikov E.S."/>
            <person name="Dynowski M."/>
            <person name="Forsberg B.O."/>
            <person name="Bechinger B."/>
            <person name="Steinem C."/>
            <person name="de Groot B.L."/>
            <person name="Zachariae U."/>
            <person name="Zeth K."/>
        </authorList>
    </citation>
    <scope>X-RAY CRYSTALLOGRAPHY (2.49 ANGSTROMS) OF 63-110 IN COMPLEX WITH ZINC</scope>
    <scope>FUNCTION (DCD-1)</scope>
    <scope>COFACTOR (DCD-1)</scope>
    <scope>SUBUNIT (DCD-1)</scope>
    <scope>SUBCELLULAR LOCATION (DCD-1)</scope>
    <scope>TOPOLOGY (DCD-1)</scope>
    <scope>MUTAGENESIS OF HIS-100</scope>
</reference>
<proteinExistence type="evidence at protein level"/>
<comment type="function">
    <molecule>DCD-1</molecule>
    <text evidence="2 4 5">Found in sweat, has an antimicrobial activity during early bacterial colonization (PubMed:11694882, PubMed:23426625). The secreted peptide assembles into homohexameric complexes that can associate with and also insert into pathogen membranes (PubMed:23426625). Once inserted in bacteria membranes forms anion channels probably altering the transmembrane potential essential for bacterial survival (PubMed:23426625). Highly effective against E.coli, E.faecalis, S.aureus and C.albicans (PubMed:11694882). Optimal pH and salt concentration resemble the conditions in sweat (PubMed:11694882). Also exhibits proteolytic activity, cleaving on the C-terminal side of Arg and, to a lesser extent, Lys residues (PubMed:17448443).</text>
</comment>
<comment type="function">
    <molecule>Survival-promoting peptide</molecule>
    <text evidence="10">Promotes survival of neurons and displays phosphatase activity (PubMed:9736629). It may bind IgG (PubMed:9736629).</text>
</comment>
<comment type="cofactor">
    <molecule>Survival-promoting peptide</molecule>
    <cofactor evidence="10">
        <name>Mn(2+)</name>
        <dbReference type="ChEBI" id="CHEBI:29035"/>
    </cofactor>
</comment>
<comment type="cofactor">
    <molecule>DCD-1</molecule>
    <cofactor evidence="5">
        <name>Zn(2+)</name>
        <dbReference type="ChEBI" id="CHEBI:29105"/>
    </cofactor>
</comment>
<comment type="subunit">
    <molecule>DCD-1</molecule>
    <text evidence="5">Homohexamer.</text>
</comment>
<comment type="interaction">
    <interactant intactId="EBI-395625">
        <id>P81605</id>
    </interactant>
    <interactant intactId="EBI-743771">
        <id>Q92624</id>
        <label>APPBP2</label>
    </interactant>
    <organismsDiffer>false</organismsDiffer>
    <experiments>3</experiments>
</comment>
<comment type="interaction">
    <interactant intactId="EBI-395625">
        <id>P81605</id>
    </interactant>
    <interactant intactId="EBI-12092171">
        <id>Q12797-6</id>
        <label>ASPH</label>
    </interactant>
    <organismsDiffer>false</organismsDiffer>
    <experiments>3</experiments>
</comment>
<comment type="subcellular location">
    <subcellularLocation>
        <location evidence="2 3 6 7 8 9 10">Secreted</location>
    </subcellularLocation>
</comment>
<comment type="subcellular location">
    <molecule>Survival-promoting peptide</molecule>
    <subcellularLocation>
        <location evidence="10">Secreted</location>
    </subcellularLocation>
</comment>
<comment type="subcellular location">
    <molecule>DCD-1</molecule>
    <subcellularLocation>
        <location evidence="16">Secreted</location>
    </subcellularLocation>
    <subcellularLocation>
        <location evidence="5">Membrane</location>
        <topology evidence="5">Peripheral membrane protein</topology>
    </subcellularLocation>
    <subcellularLocation>
        <location evidence="5">Membrane</location>
        <topology evidence="5">Single-pass membrane protein</topology>
    </subcellularLocation>
    <text evidence="5">The secreted peptide assembles into homohexameric complexes that can probably associate with pathogen membranes and also insert into these membranes where they behave as channels.</text>
</comment>
<comment type="alternative products">
    <event type="alternative splicing"/>
    <isoform>
        <id>P81605-1</id>
        <name>1</name>
        <sequence type="displayed"/>
    </isoform>
    <isoform>
        <id>P81605-2</id>
        <name>2</name>
        <sequence type="described" ref="VSP_043767"/>
    </isoform>
    <isoform>
        <id>P81605-3</id>
        <name>3</name>
        <sequence type="described" ref="VSP_043765 VSP_043766"/>
    </isoform>
</comment>
<comment type="tissue specificity">
    <text evidence="2 6 8 9">Detected in urine (at protein level) (PubMed:25326458, PubMed:36213313, PubMed:37453717). Constitutively expressed in eccrine sweat gland cells (at protein level). Secreted into the sweat at a concentration of 1-10 micrograms/ml.</text>
</comment>
<comment type="mass spectrometry" mass="4702.57" method="Electrospray" evidence="2">
    <molecule>DCD-1</molecule>
</comment>
<comment type="miscellaneous">
    <molecule>Isoform 3</molecule>
    <text evidence="15">May be produced at very low levels due to a premature stop codon in the mRNA, leading to nonsense-mediated mRNA decay.</text>
</comment>
<comment type="online information" name="Protein Spotlight">
    <link uri="https://www.proteinspotlight.org/back_issues/018"/>
    <text>Smart sweat - Issue 18 of January 2002</text>
</comment>
<evidence type="ECO:0000256" key="1">
    <source>
        <dbReference type="SAM" id="MobiDB-lite"/>
    </source>
</evidence>
<evidence type="ECO:0000269" key="2">
    <source>
    </source>
</evidence>
<evidence type="ECO:0000269" key="3">
    <source>
    </source>
</evidence>
<evidence type="ECO:0000269" key="4">
    <source>
    </source>
</evidence>
<evidence type="ECO:0000269" key="5">
    <source>
    </source>
</evidence>
<evidence type="ECO:0000269" key="6">
    <source>
    </source>
</evidence>
<evidence type="ECO:0000269" key="7">
    <source>
    </source>
</evidence>
<evidence type="ECO:0000269" key="8">
    <source>
    </source>
</evidence>
<evidence type="ECO:0000269" key="9">
    <source>
    </source>
</evidence>
<evidence type="ECO:0000269" key="10">
    <source>
    </source>
</evidence>
<evidence type="ECO:0000303" key="11">
    <source>
    </source>
</evidence>
<evidence type="ECO:0000303" key="12">
    <source>
    </source>
</evidence>
<evidence type="ECO:0000303" key="13">
    <source>
    </source>
</evidence>
<evidence type="ECO:0000303" key="14">
    <source ref="3"/>
</evidence>
<evidence type="ECO:0000305" key="15"/>
<evidence type="ECO:0000305" key="16">
    <source>
    </source>
</evidence>
<evidence type="ECO:0000305" key="17">
    <source>
    </source>
</evidence>
<evidence type="ECO:0000312" key="18">
    <source>
        <dbReference type="HGNC" id="HGNC:14669"/>
    </source>
</evidence>
<evidence type="ECO:0007744" key="19">
    <source>
        <dbReference type="PDB" id="2YMK"/>
    </source>
</evidence>
<evidence type="ECO:0007744" key="20">
    <source>
    </source>
</evidence>
<evidence type="ECO:0007829" key="21">
    <source>
        <dbReference type="PDB" id="6SHK"/>
    </source>
</evidence>